<name>ENDA_PYRHO</name>
<accession>O58033</accession>
<reference key="1">
    <citation type="journal article" date="1998" name="DNA Res.">
        <title>Complete sequence and gene organization of the genome of a hyper-thermophilic archaebacterium, Pyrococcus horikoshii OT3.</title>
        <authorList>
            <person name="Kawarabayasi Y."/>
            <person name="Sawada M."/>
            <person name="Horikawa H."/>
            <person name="Haikawa Y."/>
            <person name="Hino Y."/>
            <person name="Yamamoto S."/>
            <person name="Sekine M."/>
            <person name="Baba S."/>
            <person name="Kosugi H."/>
            <person name="Hosoyama A."/>
            <person name="Nagai Y."/>
            <person name="Sakai M."/>
            <person name="Ogura K."/>
            <person name="Otsuka R."/>
            <person name="Nakazawa H."/>
            <person name="Takamiya M."/>
            <person name="Ohfuku Y."/>
            <person name="Funahashi T."/>
            <person name="Tanaka T."/>
            <person name="Kudoh Y."/>
            <person name="Yamazaki J."/>
            <person name="Kushida N."/>
            <person name="Oguchi A."/>
            <person name="Aoki K."/>
            <person name="Yoshizawa T."/>
            <person name="Nakamura Y."/>
            <person name="Robb F.T."/>
            <person name="Horikoshi K."/>
            <person name="Masuchi Y."/>
            <person name="Shizuya H."/>
            <person name="Kikuchi H."/>
        </authorList>
    </citation>
    <scope>NUCLEOTIDE SEQUENCE [LARGE SCALE GENOMIC DNA]</scope>
    <source>
        <strain>ATCC 700860 / DSM 12428 / JCM 9974 / NBRC 100139 / OT-3</strain>
    </source>
</reference>
<feature type="chain" id="PRO_0000109478" description="tRNA-splicing endonuclease">
    <location>
        <begin position="1"/>
        <end position="170"/>
    </location>
</feature>
<feature type="active site" evidence="1">
    <location>
        <position position="110"/>
    </location>
</feature>
<feature type="active site" evidence="1">
    <location>
        <position position="116"/>
    </location>
</feature>
<feature type="active site" evidence="1">
    <location>
        <position position="147"/>
    </location>
</feature>
<proteinExistence type="inferred from homology"/>
<dbReference type="EC" id="4.6.1.16" evidence="1"/>
<dbReference type="EMBL" id="BA000001">
    <property type="protein sequence ID" value="BAA29367.1"/>
    <property type="molecule type" value="Genomic_DNA"/>
</dbReference>
<dbReference type="PIR" id="H71454">
    <property type="entry name" value="H71454"/>
</dbReference>
<dbReference type="RefSeq" id="WP_010884390.1">
    <property type="nucleotide sequence ID" value="NC_000961.1"/>
</dbReference>
<dbReference type="SMR" id="O58033"/>
<dbReference type="STRING" id="70601.gene:9377211"/>
<dbReference type="EnsemblBacteria" id="BAA29367">
    <property type="protein sequence ID" value="BAA29367"/>
    <property type="gene ID" value="BAA29367"/>
</dbReference>
<dbReference type="GeneID" id="1444177"/>
<dbReference type="KEGG" id="pho:PH0295"/>
<dbReference type="eggNOG" id="arCOG01701">
    <property type="taxonomic scope" value="Archaea"/>
</dbReference>
<dbReference type="OrthoDB" id="46045at2157"/>
<dbReference type="Proteomes" id="UP000000752">
    <property type="component" value="Chromosome"/>
</dbReference>
<dbReference type="GO" id="GO:0016829">
    <property type="term" value="F:lyase activity"/>
    <property type="evidence" value="ECO:0007669"/>
    <property type="project" value="UniProtKB-KW"/>
</dbReference>
<dbReference type="GO" id="GO:0003676">
    <property type="term" value="F:nucleic acid binding"/>
    <property type="evidence" value="ECO:0007669"/>
    <property type="project" value="InterPro"/>
</dbReference>
<dbReference type="GO" id="GO:0000213">
    <property type="term" value="F:tRNA-intron endonuclease activity"/>
    <property type="evidence" value="ECO:0007669"/>
    <property type="project" value="UniProtKB-UniRule"/>
</dbReference>
<dbReference type="GO" id="GO:0000379">
    <property type="term" value="P:tRNA-type intron splice site recognition and cleavage"/>
    <property type="evidence" value="ECO:0007669"/>
    <property type="project" value="TreeGrafter"/>
</dbReference>
<dbReference type="CDD" id="cd22363">
    <property type="entry name" value="tRNA-intron_lyase_C"/>
    <property type="match status" value="1"/>
</dbReference>
<dbReference type="FunFam" id="3.40.1350.10:FF:000006">
    <property type="entry name" value="tRNA-splicing endonuclease"/>
    <property type="match status" value="1"/>
</dbReference>
<dbReference type="Gene3D" id="3.40.1350.10">
    <property type="match status" value="1"/>
</dbReference>
<dbReference type="Gene3D" id="3.40.1170.20">
    <property type="entry name" value="tRNA intron endonuclease, N-terminal domain"/>
    <property type="match status" value="1"/>
</dbReference>
<dbReference type="HAMAP" id="MF_01833">
    <property type="entry name" value="EndA_short"/>
    <property type="match status" value="1"/>
</dbReference>
<dbReference type="InterPro" id="IPR011856">
    <property type="entry name" value="tRNA_endonuc-like_dom_sf"/>
</dbReference>
<dbReference type="InterPro" id="IPR036167">
    <property type="entry name" value="tRNA_intron_Endo_cat-like_sf"/>
</dbReference>
<dbReference type="InterPro" id="IPR006677">
    <property type="entry name" value="tRNA_intron_Endonuc_cat-like"/>
</dbReference>
<dbReference type="InterPro" id="IPR006678">
    <property type="entry name" value="tRNA_intron_Endonuc_N"/>
</dbReference>
<dbReference type="InterPro" id="IPR036740">
    <property type="entry name" value="tRNA_intron_Endonuc_N_sf"/>
</dbReference>
<dbReference type="InterPro" id="IPR006676">
    <property type="entry name" value="tRNA_splic"/>
</dbReference>
<dbReference type="InterPro" id="IPR016442">
    <property type="entry name" value="tRNA_splic_arch_short"/>
</dbReference>
<dbReference type="NCBIfam" id="TIGR00324">
    <property type="entry name" value="endA"/>
    <property type="match status" value="1"/>
</dbReference>
<dbReference type="PANTHER" id="PTHR13070:SF0">
    <property type="entry name" value="TRNA-SPLICING ENDONUCLEASE SUBUNIT SEN34"/>
    <property type="match status" value="1"/>
</dbReference>
<dbReference type="PANTHER" id="PTHR13070">
    <property type="entry name" value="TRNA-SPLICING ENDONUCLEASE SUBUNIT SEN34-RELATED"/>
    <property type="match status" value="1"/>
</dbReference>
<dbReference type="Pfam" id="PF01974">
    <property type="entry name" value="tRNA_int_endo"/>
    <property type="match status" value="1"/>
</dbReference>
<dbReference type="Pfam" id="PF02778">
    <property type="entry name" value="tRNA_int_endo_N"/>
    <property type="match status" value="1"/>
</dbReference>
<dbReference type="PIRSF" id="PIRSF005285">
    <property type="entry name" value="tRNA_splic_archaea"/>
    <property type="match status" value="1"/>
</dbReference>
<dbReference type="SUPFAM" id="SSF53032">
    <property type="entry name" value="tRNA-intron endonuclease catalytic domain-like"/>
    <property type="match status" value="1"/>
</dbReference>
<dbReference type="SUPFAM" id="SSF55267">
    <property type="entry name" value="tRNA-intron endonuclease N-terminal domain-like"/>
    <property type="match status" value="1"/>
</dbReference>
<organism>
    <name type="scientific">Pyrococcus horikoshii (strain ATCC 700860 / DSM 12428 / JCM 9974 / NBRC 100139 / OT-3)</name>
    <dbReference type="NCBI Taxonomy" id="70601"/>
    <lineage>
        <taxon>Archaea</taxon>
        <taxon>Methanobacteriati</taxon>
        <taxon>Methanobacteriota</taxon>
        <taxon>Thermococci</taxon>
        <taxon>Thermococcales</taxon>
        <taxon>Thermococcaceae</taxon>
        <taxon>Pyrococcus</taxon>
    </lineage>
</organism>
<sequence>MKKPIEFYLSGDRVYSTREKAINQLYNNRGYGELKGDKLFLSLIEAAYLTEKGWIKVVDKDKELKFDDLMKLGKSRDEDFDIKYIVYKDLRDRGYIVKSALKFGSHYRVYRKDAEHSDWLIWVLRENQRLSPNDITARARVAHGVRKNMVLAIVDEDGDVVYYKVEWIKF</sequence>
<evidence type="ECO:0000255" key="1">
    <source>
        <dbReference type="HAMAP-Rule" id="MF_01833"/>
    </source>
</evidence>
<comment type="function">
    <text evidence="1">Endonuclease that removes tRNA introns. Cleaves pre-tRNA at the 5'- and 3'-splice sites to release the intron. The products are an intron and two tRNA half-molecules bearing 2',3' cyclic phosphate and 5'-OH termini. Recognizes a pseudosymmetric substrate in which 2 bulged loops of 3 bases are separated by a stem of 4 bp.</text>
</comment>
<comment type="catalytic activity">
    <reaction evidence="1">
        <text>pretRNA = a 3'-half-tRNA molecule with a 5'-OH end + a 5'-half-tRNA molecule with a 2',3'-cyclic phosphate end + an intron with a 2',3'-cyclic phosphate and a 5'-hydroxyl terminus.</text>
        <dbReference type="EC" id="4.6.1.16"/>
    </reaction>
</comment>
<comment type="subunit">
    <text evidence="1">Homotetramer; although the tetramer contains four active sites, only two participate in the cleavage. Therefore, it should be considered as a dimer of dimers.</text>
</comment>
<comment type="similarity">
    <text evidence="1">Belongs to the tRNA-intron endonuclease family. Archaeal short subfamily.</text>
</comment>
<gene>
    <name evidence="1" type="primary">endA</name>
    <name type="ordered locus">PH0295</name>
</gene>
<keyword id="KW-0456">Lyase</keyword>
<keyword id="KW-0819">tRNA processing</keyword>
<protein>
    <recommendedName>
        <fullName evidence="1">tRNA-splicing endonuclease</fullName>
        <ecNumber evidence="1">4.6.1.16</ecNumber>
    </recommendedName>
    <alternativeName>
        <fullName evidence="1">tRNA-intron endonuclease</fullName>
    </alternativeName>
</protein>